<gene>
    <name evidence="1" type="primary">mukB</name>
    <name type="ordered locus">STY0996</name>
    <name type="ordered locus">t1940</name>
</gene>
<accession>Q8Z7Z5</accession>
<name>MUKB_SALTI</name>
<protein>
    <recommendedName>
        <fullName evidence="1">Chromosome partition protein MukB</fullName>
    </recommendedName>
    <alternativeName>
        <fullName evidence="1">Structural maintenance of chromosome-related protein</fullName>
    </alternativeName>
</protein>
<proteinExistence type="inferred from homology"/>
<evidence type="ECO:0000255" key="1">
    <source>
        <dbReference type="HAMAP-Rule" id="MF_01800"/>
    </source>
</evidence>
<evidence type="ECO:0000256" key="2">
    <source>
        <dbReference type="SAM" id="MobiDB-lite"/>
    </source>
</evidence>
<reference key="1">
    <citation type="journal article" date="2001" name="Nature">
        <title>Complete genome sequence of a multiple drug resistant Salmonella enterica serovar Typhi CT18.</title>
        <authorList>
            <person name="Parkhill J."/>
            <person name="Dougan G."/>
            <person name="James K.D."/>
            <person name="Thomson N.R."/>
            <person name="Pickard D."/>
            <person name="Wain J."/>
            <person name="Churcher C.M."/>
            <person name="Mungall K.L."/>
            <person name="Bentley S.D."/>
            <person name="Holden M.T.G."/>
            <person name="Sebaihia M."/>
            <person name="Baker S."/>
            <person name="Basham D."/>
            <person name="Brooks K."/>
            <person name="Chillingworth T."/>
            <person name="Connerton P."/>
            <person name="Cronin A."/>
            <person name="Davis P."/>
            <person name="Davies R.M."/>
            <person name="Dowd L."/>
            <person name="White N."/>
            <person name="Farrar J."/>
            <person name="Feltwell T."/>
            <person name="Hamlin N."/>
            <person name="Haque A."/>
            <person name="Hien T.T."/>
            <person name="Holroyd S."/>
            <person name="Jagels K."/>
            <person name="Krogh A."/>
            <person name="Larsen T.S."/>
            <person name="Leather S."/>
            <person name="Moule S."/>
            <person name="O'Gaora P."/>
            <person name="Parry C."/>
            <person name="Quail M.A."/>
            <person name="Rutherford K.M."/>
            <person name="Simmonds M."/>
            <person name="Skelton J."/>
            <person name="Stevens K."/>
            <person name="Whitehead S."/>
            <person name="Barrell B.G."/>
        </authorList>
    </citation>
    <scope>NUCLEOTIDE SEQUENCE [LARGE SCALE GENOMIC DNA]</scope>
    <source>
        <strain>CT18</strain>
    </source>
</reference>
<reference key="2">
    <citation type="journal article" date="2003" name="J. Bacteriol.">
        <title>Comparative genomics of Salmonella enterica serovar Typhi strains Ty2 and CT18.</title>
        <authorList>
            <person name="Deng W."/>
            <person name="Liou S.-R."/>
            <person name="Plunkett G. III"/>
            <person name="Mayhew G.F."/>
            <person name="Rose D.J."/>
            <person name="Burland V."/>
            <person name="Kodoyianni V."/>
            <person name="Schwartz D.C."/>
            <person name="Blattner F.R."/>
        </authorList>
    </citation>
    <scope>NUCLEOTIDE SEQUENCE [LARGE SCALE GENOMIC DNA]</scope>
    <source>
        <strain>ATCC 700931 / Ty2</strain>
    </source>
</reference>
<dbReference type="EMBL" id="AL513382">
    <property type="protein sequence ID" value="CAD05394.1"/>
    <property type="molecule type" value="Genomic_DNA"/>
</dbReference>
<dbReference type="EMBL" id="AE014613">
    <property type="protein sequence ID" value="AAO69555.1"/>
    <property type="molecule type" value="Genomic_DNA"/>
</dbReference>
<dbReference type="RefSeq" id="NP_455480.1">
    <property type="nucleotide sequence ID" value="NC_003198.1"/>
</dbReference>
<dbReference type="RefSeq" id="WP_000572729.1">
    <property type="nucleotide sequence ID" value="NZ_WSUR01000013.1"/>
</dbReference>
<dbReference type="SMR" id="Q8Z7Z5"/>
<dbReference type="STRING" id="220341.gene:17584985"/>
<dbReference type="KEGG" id="stt:t1940"/>
<dbReference type="KEGG" id="sty:STY0996"/>
<dbReference type="PATRIC" id="fig|220341.7.peg.1004"/>
<dbReference type="eggNOG" id="COG3096">
    <property type="taxonomic scope" value="Bacteria"/>
</dbReference>
<dbReference type="HOGENOM" id="CLU_004430_0_0_6"/>
<dbReference type="OMA" id="FIAVYQH"/>
<dbReference type="OrthoDB" id="6722439at2"/>
<dbReference type="Proteomes" id="UP000000541">
    <property type="component" value="Chromosome"/>
</dbReference>
<dbReference type="Proteomes" id="UP000002670">
    <property type="component" value="Chromosome"/>
</dbReference>
<dbReference type="GO" id="GO:0005737">
    <property type="term" value="C:cytoplasm"/>
    <property type="evidence" value="ECO:0007669"/>
    <property type="project" value="UniProtKB-UniRule"/>
</dbReference>
<dbReference type="GO" id="GO:0009295">
    <property type="term" value="C:nucleoid"/>
    <property type="evidence" value="ECO:0007669"/>
    <property type="project" value="UniProtKB-SubCell"/>
</dbReference>
<dbReference type="GO" id="GO:0005524">
    <property type="term" value="F:ATP binding"/>
    <property type="evidence" value="ECO:0007669"/>
    <property type="project" value="UniProtKB-UniRule"/>
</dbReference>
<dbReference type="GO" id="GO:0003677">
    <property type="term" value="F:DNA binding"/>
    <property type="evidence" value="ECO:0007669"/>
    <property type="project" value="UniProtKB-UniRule"/>
</dbReference>
<dbReference type="GO" id="GO:0051301">
    <property type="term" value="P:cell division"/>
    <property type="evidence" value="ECO:0007669"/>
    <property type="project" value="UniProtKB-KW"/>
</dbReference>
<dbReference type="GO" id="GO:0030261">
    <property type="term" value="P:chromosome condensation"/>
    <property type="evidence" value="ECO:0007669"/>
    <property type="project" value="UniProtKB-KW"/>
</dbReference>
<dbReference type="GO" id="GO:0007059">
    <property type="term" value="P:chromosome segregation"/>
    <property type="evidence" value="ECO:0007669"/>
    <property type="project" value="UniProtKB-UniRule"/>
</dbReference>
<dbReference type="GO" id="GO:0006260">
    <property type="term" value="P:DNA replication"/>
    <property type="evidence" value="ECO:0007669"/>
    <property type="project" value="UniProtKB-UniRule"/>
</dbReference>
<dbReference type="FunFam" id="3.30.70.3500:FF:000001">
    <property type="entry name" value="Chromosome partition protein MukB"/>
    <property type="match status" value="1"/>
</dbReference>
<dbReference type="FunFam" id="3.40.1140.10:FF:000001">
    <property type="entry name" value="Chromosome partition protein MukB"/>
    <property type="match status" value="1"/>
</dbReference>
<dbReference type="FunFam" id="3.40.1140.10:FF:000002">
    <property type="entry name" value="Chromosome partition protein MukB"/>
    <property type="match status" value="1"/>
</dbReference>
<dbReference type="Gene3D" id="1.10.287.1490">
    <property type="match status" value="1"/>
</dbReference>
<dbReference type="Gene3D" id="1.20.58.850">
    <property type="match status" value="1"/>
</dbReference>
<dbReference type="Gene3D" id="3.40.1140.10">
    <property type="match status" value="2"/>
</dbReference>
<dbReference type="Gene3D" id="1.20.5.420">
    <property type="entry name" value="Immunoglobulin FC, subunit C"/>
    <property type="match status" value="1"/>
</dbReference>
<dbReference type="Gene3D" id="3.30.70.3500">
    <property type="entry name" value="MukB, hinge domain"/>
    <property type="match status" value="1"/>
</dbReference>
<dbReference type="HAMAP" id="MF_01800">
    <property type="entry name" value="MukB"/>
    <property type="match status" value="1"/>
</dbReference>
<dbReference type="InterPro" id="IPR012090">
    <property type="entry name" value="MukB"/>
</dbReference>
<dbReference type="InterPro" id="IPR050308">
    <property type="entry name" value="MukB/SMC"/>
</dbReference>
<dbReference type="InterPro" id="IPR032520">
    <property type="entry name" value="MukB_hinge"/>
</dbReference>
<dbReference type="InterPro" id="IPR042501">
    <property type="entry name" value="MukB_hinge_sf"/>
</dbReference>
<dbReference type="InterPro" id="IPR007406">
    <property type="entry name" value="MukB_N_dom"/>
</dbReference>
<dbReference type="InterPro" id="IPR027417">
    <property type="entry name" value="P-loop_NTPase"/>
</dbReference>
<dbReference type="NCBIfam" id="NF003422">
    <property type="entry name" value="PRK04863.1"/>
    <property type="match status" value="1"/>
</dbReference>
<dbReference type="PANTHER" id="PTHR42963">
    <property type="entry name" value="CHROMOSOME PARTITION PROTEIN MUKB"/>
    <property type="match status" value="1"/>
</dbReference>
<dbReference type="PANTHER" id="PTHR42963:SF1">
    <property type="entry name" value="DUF4476 DOMAIN-CONTAINING PROTEIN"/>
    <property type="match status" value="1"/>
</dbReference>
<dbReference type="Pfam" id="PF04310">
    <property type="entry name" value="MukB"/>
    <property type="match status" value="1"/>
</dbReference>
<dbReference type="Pfam" id="PF16330">
    <property type="entry name" value="MukB_hinge"/>
    <property type="match status" value="1"/>
</dbReference>
<dbReference type="Pfam" id="PF13558">
    <property type="entry name" value="SbcC_Walker_B"/>
    <property type="match status" value="1"/>
</dbReference>
<dbReference type="PIRSF" id="PIRSF005246">
    <property type="entry name" value="MukB"/>
    <property type="match status" value="1"/>
</dbReference>
<dbReference type="SUPFAM" id="SSF52540">
    <property type="entry name" value="P-loop containing nucleoside triphosphate hydrolases"/>
    <property type="match status" value="2"/>
</dbReference>
<sequence>MIERGKFRSLTLINWNGFFARTFDLDELVTTLSGGNGAGKSTTMAAFVTALIPDLTLLHFRNTTEAGATSGSRDKGLHGKLKAGVCYSMLDTINSRHQRVVVGVRLQQVAGRDRKVDIKPFAIQGLPMSVQPTQLVTETLNERQARVLSLAELKDKLDEMEGVQFKQFNSITDYHSLMFDLGIIARRLRSASDRSKFYRLIEASLYGGISSAITRSLRDYLLPENSGVRKAFQDMEAALRENRLTLEAIRVTQSDRDLFKHLISEATDYVAADYMRHANERRVHLDQALAFRRELYTSRKQLAAEQYKHVDMARELGEHNGAEGSLEADYQAASDHLNLVQTALRQQEKIERYEADLEELQIRFEEQNEVVAEAAEMQDENEARAEAAELEVDELKSQLADYQQALDVQQTRAIQYNQAISALARAKELCHLPDLTPESAAEWLDTFQAKEQEATEKLLSLEQKMSVAQTAHSQFEQAYQLVAAINGPLARSEAWDVARELLRDGVNQRHLAEQVQPLRMRLSELEQRLREQQEAERLLAEFCKRQGKNFDIDELEALHQELEARIASLSESVSSASEQRMALRQEQEQLQSRIQHLMQRAPVWLAAQNSLNQLSEQCGEEFTSSQEVTEYLQQLLEREREAIVERDEVGARKNAVDEEIERLSQPGGAEDQRLNALAERFGGVLLSEIYDDVSLEDAPYFSALYGPSRHAIVVPDLSQIAEQLEGLTDCPEDLYLIEGDPQSFDDSVFSVDELEKAVVVKIADRQWRYSRFPSLPIFGRAARENRIESLHAEREVLSERFATLSFDVQKTQRLHQAFSRFIGSHLSVAFEDDPEAEIRRLNGRRVELERALATHESDNQQQRLQFEQAKEGVSALNRLLPRLNLLADETLADRVDEIQERLDEAQEAARFVQQYGNQLAKLEPMVSVLQSDPEQFEQLKEDYAWSQQMQRDARQQAFALAEVVERRAHFSYSDSAEMLSGNSDLNEKLRQRLEQAEAERTRAREALRSHAAQLSQYSQVLASLKSSYDTKKELLNDLQRELQDIGVRADSGAEERARQRRDELHAQLSNNRSRRNQLEKALTFCEAEMENLTRKLRKLERDYHEMREQVVTAKAGWCAVMRMVKDNGVERRLHRRELAYLSADELRSMSDKALGALRLAVADNEHLRDVLRLSEDPKRPERKIQFFVAVYQHLRERIRQDIIRTDDPVEAIEQMEIELSRLTEELTSREQKLAISSRSVANIIRKTIQREQNRIRMLNQGLQSVSFGQVNSVRLNVNVRETHATLLDVLSEQQEQHQDLFNSNRLTFSEALAKLYQRLNPQIDMGQRTPQTIGEELLDYRNYLEMEVEVNRGSDGWLRAESGALSTGEAIGTGMSILVMVVQSWEDEARRLRGKDISPCRLLFLDEAARLDARSIATLFELCERLQMQLIIAAPENISPEKGTTYKLVRKVFQNTEHVHVVGLRGFAPQLPETLPGTQAEDTPSEAS</sequence>
<feature type="chain" id="PRO_0000068226" description="Chromosome partition protein MukB">
    <location>
        <begin position="1"/>
        <end position="1488"/>
    </location>
</feature>
<feature type="region of interest" description="Flexible hinge" evidence="1">
    <location>
        <begin position="666"/>
        <end position="783"/>
    </location>
</feature>
<feature type="region of interest" description="Disordered" evidence="2">
    <location>
        <begin position="1049"/>
        <end position="1074"/>
    </location>
</feature>
<feature type="coiled-coil region" evidence="1">
    <location>
        <begin position="326"/>
        <end position="418"/>
    </location>
</feature>
<feature type="coiled-coil region" evidence="1">
    <location>
        <begin position="444"/>
        <end position="472"/>
    </location>
</feature>
<feature type="coiled-coil region" evidence="1">
    <location>
        <begin position="509"/>
        <end position="602"/>
    </location>
</feature>
<feature type="coiled-coil region" evidence="1">
    <location>
        <begin position="835"/>
        <end position="923"/>
    </location>
</feature>
<feature type="coiled-coil region" evidence="1">
    <location>
        <begin position="977"/>
        <end position="1116"/>
    </location>
</feature>
<feature type="coiled-coil region" evidence="1">
    <location>
        <begin position="1209"/>
        <end position="1265"/>
    </location>
</feature>
<feature type="compositionally biased region" description="Basic and acidic residues" evidence="2">
    <location>
        <begin position="1051"/>
        <end position="1065"/>
    </location>
</feature>
<feature type="binding site" evidence="1">
    <location>
        <begin position="34"/>
        <end position="41"/>
    </location>
    <ligand>
        <name>ATP</name>
        <dbReference type="ChEBI" id="CHEBI:30616"/>
    </ligand>
</feature>
<keyword id="KW-0067">ATP-binding</keyword>
<keyword id="KW-0131">Cell cycle</keyword>
<keyword id="KW-0132">Cell division</keyword>
<keyword id="KW-0159">Chromosome partition</keyword>
<keyword id="KW-0175">Coiled coil</keyword>
<keyword id="KW-0963">Cytoplasm</keyword>
<keyword id="KW-0226">DNA condensation</keyword>
<keyword id="KW-0238">DNA-binding</keyword>
<keyword id="KW-0547">Nucleotide-binding</keyword>
<comment type="function">
    <text evidence="1">Plays a central role in chromosome condensation, segregation and cell cycle progression. Functions as a homodimer, which is essential for chromosome partition. Involved in negative DNA supercoiling in vivo, and by this means organize and compact chromosomes. May achieve or facilitate chromosome segregation by condensation DNA from both sides of a centrally located replisome during cell division.</text>
</comment>
<comment type="subunit">
    <text evidence="1">Homodimerization via its hinge domain. Binds to DNA via its C-terminal region. Interacts, and probably forms a ternary complex, with MukE and MukF via its C-terminal region. The complex formation is stimulated by calcium or magnesium. Interacts with tubulin-related protein FtsZ.</text>
</comment>
<comment type="subcellular location">
    <subcellularLocation>
        <location evidence="1">Cytoplasm</location>
        <location evidence="1">Nucleoid</location>
    </subcellularLocation>
    <text evidence="1">Restricted to the nucleoid region.</text>
</comment>
<comment type="domain">
    <text evidence="1">The hinge domain, which separates the large intramolecular coiled coil regions, allows the homodimerization, forming a V-shaped homodimer.</text>
</comment>
<comment type="similarity">
    <text evidence="1">Belongs to the SMC family. MukB subfamily.</text>
</comment>
<organism>
    <name type="scientific">Salmonella typhi</name>
    <dbReference type="NCBI Taxonomy" id="90370"/>
    <lineage>
        <taxon>Bacteria</taxon>
        <taxon>Pseudomonadati</taxon>
        <taxon>Pseudomonadota</taxon>
        <taxon>Gammaproteobacteria</taxon>
        <taxon>Enterobacterales</taxon>
        <taxon>Enterobacteriaceae</taxon>
        <taxon>Salmonella</taxon>
    </lineage>
</organism>